<gene>
    <name evidence="4" type="ordered locus">YJR107C-A</name>
</gene>
<evidence type="ECO:0000256" key="1">
    <source>
        <dbReference type="SAM" id="MobiDB-lite"/>
    </source>
</evidence>
<evidence type="ECO:0000269" key="2">
    <source>
    </source>
</evidence>
<evidence type="ECO:0000305" key="3"/>
<evidence type="ECO:0000312" key="4">
    <source>
        <dbReference type="SGD" id="S000303810"/>
    </source>
</evidence>
<comment type="disruption phenotype">
    <text evidence="2">Causes increased sensitivity to osmotic stress.</text>
</comment>
<dbReference type="EMBL" id="BK006943">
    <property type="protein sequence ID" value="DAD54807.1"/>
    <property type="molecule type" value="Genomic_DNA"/>
</dbReference>
<dbReference type="RefSeq" id="NP_001381966.1">
    <property type="nucleotide sequence ID" value="NM_001395036.1"/>
</dbReference>
<dbReference type="iPTMnet" id="P0CT86"/>
<dbReference type="PeptideAtlas" id="P0CT86"/>
<dbReference type="GeneID" id="65052910"/>
<dbReference type="AGR" id="SGD:S000303810"/>
<dbReference type="SGD" id="S000303810">
    <property type="gene designation" value="YJR107C-A"/>
</dbReference>
<dbReference type="InParanoid" id="P0CT86"/>
<dbReference type="OrthoDB" id="4040496at2759"/>
<dbReference type="PRO" id="PR:P0CT86"/>
<dbReference type="Proteomes" id="UP000002311">
    <property type="component" value="Chromosome X"/>
</dbReference>
<dbReference type="RNAct" id="P0CT86">
    <property type="molecule type" value="protein"/>
</dbReference>
<dbReference type="GO" id="GO:0071470">
    <property type="term" value="P:cellular response to osmotic stress"/>
    <property type="evidence" value="ECO:0000315"/>
    <property type="project" value="SGD"/>
</dbReference>
<dbReference type="InterPro" id="IPR033775">
    <property type="entry name" value="DUF5137"/>
</dbReference>
<dbReference type="Pfam" id="PF17220">
    <property type="entry name" value="DUF5137"/>
    <property type="match status" value="1"/>
</dbReference>
<sequence length="78" mass="8955">MCDDSYDAVEEYYFNKSVAGISGQENWNKQLATQVYSRSLQPEILPTLKPLSCNKERANAGKRVSEEEQINGKRKRKD</sequence>
<proteinExistence type="evidence at protein level"/>
<feature type="chain" id="PRO_0000435366" description="Uncharacterized protein YJR107C-A">
    <location>
        <begin position="1"/>
        <end position="78"/>
    </location>
</feature>
<feature type="region of interest" description="Disordered" evidence="1">
    <location>
        <begin position="56"/>
        <end position="78"/>
    </location>
</feature>
<feature type="compositionally biased region" description="Basic and acidic residues" evidence="1">
    <location>
        <begin position="56"/>
        <end position="66"/>
    </location>
</feature>
<protein>
    <recommendedName>
        <fullName evidence="3">Uncharacterized protein YJR107C-A</fullName>
    </recommendedName>
</protein>
<accession>P0CT86</accession>
<accession>A0A8D9UGL5</accession>
<keyword id="KW-0903">Direct protein sequencing</keyword>
<keyword id="KW-1185">Reference proteome</keyword>
<reference key="1">
    <citation type="journal article" date="1996" name="EMBO J.">
        <title>Complete nucleotide sequence of Saccharomyces cerevisiae chromosome X.</title>
        <authorList>
            <person name="Galibert F."/>
            <person name="Alexandraki D."/>
            <person name="Baur A."/>
            <person name="Boles E."/>
            <person name="Chalwatzis N."/>
            <person name="Chuat J.-C."/>
            <person name="Coster F."/>
            <person name="Cziepluch C."/>
            <person name="de Haan M."/>
            <person name="Domdey H."/>
            <person name="Durand P."/>
            <person name="Entian K.-D."/>
            <person name="Gatius M."/>
            <person name="Goffeau A."/>
            <person name="Grivell L.A."/>
            <person name="Hennemann A."/>
            <person name="Herbert C.J."/>
            <person name="Heumann K."/>
            <person name="Hilger F."/>
            <person name="Hollenberg C.P."/>
            <person name="Huang M.-E."/>
            <person name="Jacq C."/>
            <person name="Jauniaux J.-C."/>
            <person name="Katsoulou C."/>
            <person name="Kirchrath L."/>
            <person name="Kleine K."/>
            <person name="Kordes E."/>
            <person name="Koetter P."/>
            <person name="Liebl S."/>
            <person name="Louis E.J."/>
            <person name="Manus V."/>
            <person name="Mewes H.-W."/>
            <person name="Miosga T."/>
            <person name="Obermaier B."/>
            <person name="Perea J."/>
            <person name="Pohl T.M."/>
            <person name="Portetelle D."/>
            <person name="Pujol A."/>
            <person name="Purnelle B."/>
            <person name="Ramezani Rad M."/>
            <person name="Rasmussen S.W."/>
            <person name="Rose M."/>
            <person name="Rossau R."/>
            <person name="Schaaff-Gerstenschlaeger I."/>
            <person name="Smits P.H.M."/>
            <person name="Scarcez T."/>
            <person name="Soriano N."/>
            <person name="To Van D."/>
            <person name="Tzermia M."/>
            <person name="Van Broekhoven A."/>
            <person name="Vandenbol M."/>
            <person name="Wedler H."/>
            <person name="von Wettstein D."/>
            <person name="Wambutt R."/>
            <person name="Zagulski M."/>
            <person name="Zollner A."/>
            <person name="Karpfinger-Hartl L."/>
        </authorList>
    </citation>
    <scope>NUCLEOTIDE SEQUENCE [LARGE SCALE GENOMIC DNA]</scope>
    <source>
        <strain>ATCC 204508 / S288c</strain>
    </source>
</reference>
<reference key="2">
    <citation type="journal article" date="2014" name="G3 (Bethesda)">
        <title>The reference genome sequence of Saccharomyces cerevisiae: Then and now.</title>
        <authorList>
            <person name="Engel S.R."/>
            <person name="Dietrich F.S."/>
            <person name="Fisk D.G."/>
            <person name="Binkley G."/>
            <person name="Balakrishnan R."/>
            <person name="Costanzo M.C."/>
            <person name="Dwight S.S."/>
            <person name="Hitz B.C."/>
            <person name="Karra K."/>
            <person name="Nash R.S."/>
            <person name="Weng S."/>
            <person name="Wong E.D."/>
            <person name="Lloyd P."/>
            <person name="Skrzypek M.S."/>
            <person name="Miyasato S.R."/>
            <person name="Simison M."/>
            <person name="Cherry J.M."/>
        </authorList>
    </citation>
    <scope>GENOME REANNOTATION</scope>
    <source>
        <strain>ATCC 204508 / S288c</strain>
    </source>
</reference>
<reference key="3">
    <citation type="journal article" date="2015" name="J. Proteome Res.">
        <title>Proteogenomic discovery of a small, novel protein in yeast reveals a strategy for the detection of unannotated short open reading frames.</title>
        <authorList>
            <person name="Yagoub D."/>
            <person name="Tay A.P."/>
            <person name="Chen Z."/>
            <person name="Hamey J.J."/>
            <person name="Cai C."/>
            <person name="Chia S.Z."/>
            <person name="Hart-Smith G."/>
            <person name="Wilkins M.R."/>
        </authorList>
    </citation>
    <scope>PROTEIN SEQUENCE OF 17-55</scope>
    <scope>IDENTIFICATION BY MASS SPECTROMETRY</scope>
    <scope>DISRUPTION PHENOTYPE</scope>
    <source>
        <strain>ATCC 201388 / BY4741</strain>
    </source>
</reference>
<name>YJ107_YEAST</name>
<organism>
    <name type="scientific">Saccharomyces cerevisiae (strain ATCC 204508 / S288c)</name>
    <name type="common">Baker's yeast</name>
    <dbReference type="NCBI Taxonomy" id="559292"/>
    <lineage>
        <taxon>Eukaryota</taxon>
        <taxon>Fungi</taxon>
        <taxon>Dikarya</taxon>
        <taxon>Ascomycota</taxon>
        <taxon>Saccharomycotina</taxon>
        <taxon>Saccharomycetes</taxon>
        <taxon>Saccharomycetales</taxon>
        <taxon>Saccharomycetaceae</taxon>
        <taxon>Saccharomyces</taxon>
    </lineage>
</organism>